<proteinExistence type="evidence at protein level"/>
<evidence type="ECO:0000269" key="1">
    <source>
    </source>
</evidence>
<evidence type="ECO:0000269" key="2">
    <source>
    </source>
</evidence>
<evidence type="ECO:0000303" key="3">
    <source>
    </source>
</evidence>
<evidence type="ECO:0000303" key="4">
    <source>
    </source>
</evidence>
<evidence type="ECO:0000305" key="5"/>
<evidence type="ECO:0000305" key="6">
    <source>
    </source>
</evidence>
<evidence type="ECO:0000305" key="7">
    <source>
    </source>
</evidence>
<evidence type="ECO:0007829" key="8">
    <source>
        <dbReference type="PDB" id="5MMI"/>
    </source>
</evidence>
<feature type="transit peptide" description="Chloroplast" evidence="1">
    <location>
        <begin position="1"/>
        <end position="91"/>
    </location>
</feature>
<feature type="chain" id="PRO_0000030519" description="Large ribosomal subunit protein bL34c">
    <location>
        <begin position="92"/>
        <end position="152"/>
    </location>
</feature>
<feature type="helix" evidence="8">
    <location>
        <begin position="96"/>
        <end position="99"/>
    </location>
</feature>
<feature type="helix" evidence="8">
    <location>
        <begin position="105"/>
        <end position="109"/>
    </location>
</feature>
<feature type="helix" evidence="8">
    <location>
        <begin position="114"/>
        <end position="117"/>
    </location>
</feature>
<feature type="helix" evidence="8">
    <location>
        <begin position="121"/>
        <end position="133"/>
    </location>
</feature>
<feature type="strand" evidence="8">
    <location>
        <begin position="145"/>
        <end position="149"/>
    </location>
</feature>
<reference key="1">
    <citation type="journal article" date="2000" name="J. Biol. Chem.">
        <title>The plastid ribosomal proteins. Identification of all the proteins in the 50S subunit of an organelle ribosome (chloroplast).</title>
        <authorList>
            <person name="Yamaguchi K."/>
            <person name="Subramanian A.R."/>
        </authorList>
    </citation>
    <scope>NUCLEOTIDE SEQUENCE [MRNA]</scope>
    <scope>PROTEIN SEQUENCE OF 92-101</scope>
    <scope>SUBUNIT</scope>
    <scope>SUBCELLULAR LOCATION</scope>
    <scope>MASS SPECTROMETRY</scope>
    <source>
        <strain>cv. Alwaro</strain>
        <tissue>Leaf</tissue>
    </source>
</reference>
<reference key="2">
    <citation type="journal article" date="2014" name="Nature">
        <title>The genome of the recently domesticated crop plant sugar beet (Beta vulgaris).</title>
        <authorList>
            <person name="Dohm J.C."/>
            <person name="Minoche A.E."/>
            <person name="Holtgraewe D."/>
            <person name="Capella-Gutierrez S."/>
            <person name="Zakrzewski F."/>
            <person name="Tafer H."/>
            <person name="Rupp O."/>
            <person name="Soerensen T.R."/>
            <person name="Stracke R."/>
            <person name="Reinhardt R."/>
            <person name="Goesmann A."/>
            <person name="Kraft T."/>
            <person name="Schulz B."/>
            <person name="Stadler P.F."/>
            <person name="Schmidt T."/>
            <person name="Gabaldon T."/>
            <person name="Lehrach H."/>
            <person name="Weisshaar B."/>
            <person name="Himmelbauer H."/>
        </authorList>
    </citation>
    <scope>NUCLEOTIDE SEQUENCE [LARGE SCALE GENOMIC DNA]</scope>
    <source>
        <strain>cv. Viroflay</strain>
        <tissue>Leaf</tissue>
    </source>
</reference>
<reference key="3">
    <citation type="journal article" date="2007" name="Proc. Natl. Acad. Sci. U.S.A.">
        <title>Cryo-EM study of the spinach chloroplast ribosome reveals the structural and functional roles of plastid-specific ribosomal proteins.</title>
        <authorList>
            <person name="Sharma M.R."/>
            <person name="Wilson D.N."/>
            <person name="Datta P.P."/>
            <person name="Barat C."/>
            <person name="Schluenzen F."/>
            <person name="Fucini P."/>
            <person name="Agrawal R.K."/>
        </authorList>
    </citation>
    <scope>STRUCTURE BY ELECTRON MICROSCOPY (9.4 ANGSTROMS)</scope>
</reference>
<reference key="4">
    <citation type="journal article" date="2016" name="Sci. Rep.">
        <title>Cryo-EM structure of the large subunit of the spinach chloroplast ribosome.</title>
        <authorList>
            <person name="Ahmed T."/>
            <person name="Yin Z."/>
            <person name="Bhushan S."/>
        </authorList>
    </citation>
    <scope>STRUCTURE BY ELECTRON MICROSCOPY (3.50 ANGSTROMS)</scope>
</reference>
<reference key="5">
    <citation type="journal article" date="2017" name="EMBO J.">
        <title>The complete structure of the chloroplast 70S ribosome in complex with translation factor pY.</title>
        <authorList>
            <person name="Bieri P."/>
            <person name="Leibundgut M."/>
            <person name="Saurer M."/>
            <person name="Boehringer D."/>
            <person name="Ban N."/>
        </authorList>
    </citation>
    <scope>STRUCTURE BY ELECTRON MICROSCOPY (3.25 ANGSTROMS)</scope>
    <scope>SUBUNIT</scope>
    <scope>SUBCELLULAR LOCATION</scope>
</reference>
<accession>P82244</accession>
<accession>A0A0K9RGW2</accession>
<keyword id="KW-0002">3D-structure</keyword>
<keyword id="KW-0150">Chloroplast</keyword>
<keyword id="KW-0903">Direct protein sequencing</keyword>
<keyword id="KW-0934">Plastid</keyword>
<keyword id="KW-1185">Reference proteome</keyword>
<keyword id="KW-0687">Ribonucleoprotein</keyword>
<keyword id="KW-0689">Ribosomal protein</keyword>
<keyword id="KW-0694">RNA-binding</keyword>
<keyword id="KW-0699">rRNA-binding</keyword>
<keyword id="KW-0809">Transit peptide</keyword>
<sequence length="152" mass="16096">MATLSLLSTGVGAAITNRTPSASLTFITGSRTTNKRVSFNGGSARSGSLHCSFLAPSSSLSSNFSGLSLGLDLTSNTGVSTDRCRRFVVRAGKAALCLTKRSRSRKSLARTHGFRLRMSTTSGRALLKRRRAKGRKILCTKTNPSSGKRASP</sequence>
<dbReference type="EMBL" id="AF238221">
    <property type="protein sequence ID" value="AAF64157.1"/>
    <property type="molecule type" value="mRNA"/>
</dbReference>
<dbReference type="EMBL" id="KQ142564">
    <property type="protein sequence ID" value="KNA18199.1"/>
    <property type="molecule type" value="Genomic_DNA"/>
</dbReference>
<dbReference type="PDB" id="4V61">
    <property type="method" value="EM"/>
    <property type="resolution" value="9.40 A"/>
    <property type="chains" value="B4=1-152"/>
</dbReference>
<dbReference type="PDB" id="5H1S">
    <property type="method" value="EM"/>
    <property type="resolution" value="3.50 A"/>
    <property type="chains" value="d=92-151"/>
</dbReference>
<dbReference type="PDB" id="5MLC">
    <property type="method" value="EM"/>
    <property type="resolution" value="3.90 A"/>
    <property type="chains" value="4=1-152"/>
</dbReference>
<dbReference type="PDB" id="5MMI">
    <property type="method" value="EM"/>
    <property type="resolution" value="3.25 A"/>
    <property type="chains" value="3=1-152"/>
</dbReference>
<dbReference type="PDB" id="5MMM">
    <property type="method" value="EM"/>
    <property type="resolution" value="3.40 A"/>
    <property type="chains" value="3=1-152"/>
</dbReference>
<dbReference type="PDB" id="5X8P">
    <property type="method" value="EM"/>
    <property type="resolution" value="3.40 A"/>
    <property type="chains" value="3=92-152"/>
</dbReference>
<dbReference type="PDB" id="5X8T">
    <property type="method" value="EM"/>
    <property type="resolution" value="3.30 A"/>
    <property type="chains" value="3=92-152"/>
</dbReference>
<dbReference type="PDB" id="6ERI">
    <property type="method" value="EM"/>
    <property type="resolution" value="3.00 A"/>
    <property type="chains" value="Ac=92-152"/>
</dbReference>
<dbReference type="PDBsum" id="4V61"/>
<dbReference type="PDBsum" id="5H1S"/>
<dbReference type="PDBsum" id="5MLC"/>
<dbReference type="PDBsum" id="5MMI"/>
<dbReference type="PDBsum" id="5MMM"/>
<dbReference type="PDBsum" id="5X8P"/>
<dbReference type="PDBsum" id="5X8T"/>
<dbReference type="PDBsum" id="6ERI"/>
<dbReference type="EMDB" id="EMD-3525"/>
<dbReference type="EMDB" id="EMD-3531"/>
<dbReference type="EMDB" id="EMD-3533"/>
<dbReference type="EMDB" id="EMD-3941"/>
<dbReference type="EMDB" id="EMD-6709"/>
<dbReference type="EMDB" id="EMD-6711"/>
<dbReference type="EMDB" id="EMD-9572"/>
<dbReference type="SMR" id="P82244"/>
<dbReference type="IntAct" id="P82244">
    <property type="interactions" value="1"/>
</dbReference>
<dbReference type="STRING" id="3562.P82244"/>
<dbReference type="OrthoDB" id="431691at2759"/>
<dbReference type="Proteomes" id="UP001155700">
    <property type="component" value="Unplaced"/>
</dbReference>
<dbReference type="GO" id="GO:0009507">
    <property type="term" value="C:chloroplast"/>
    <property type="evidence" value="ECO:0007669"/>
    <property type="project" value="UniProtKB-SubCell"/>
</dbReference>
<dbReference type="GO" id="GO:0005762">
    <property type="term" value="C:mitochondrial large ribosomal subunit"/>
    <property type="evidence" value="ECO:0000318"/>
    <property type="project" value="GO_Central"/>
</dbReference>
<dbReference type="GO" id="GO:0019843">
    <property type="term" value="F:rRNA binding"/>
    <property type="evidence" value="ECO:0007669"/>
    <property type="project" value="UniProtKB-KW"/>
</dbReference>
<dbReference type="GO" id="GO:0003735">
    <property type="term" value="F:structural constituent of ribosome"/>
    <property type="evidence" value="ECO:0007669"/>
    <property type="project" value="InterPro"/>
</dbReference>
<dbReference type="GO" id="GO:0006412">
    <property type="term" value="P:translation"/>
    <property type="evidence" value="ECO:0007669"/>
    <property type="project" value="InterPro"/>
</dbReference>
<dbReference type="FunFam" id="1.10.287.3980:FF:000002">
    <property type="entry name" value="50S ribosomal protein L34"/>
    <property type="match status" value="1"/>
</dbReference>
<dbReference type="Gene3D" id="1.10.287.3980">
    <property type="match status" value="1"/>
</dbReference>
<dbReference type="HAMAP" id="MF_00391">
    <property type="entry name" value="Ribosomal_bL34"/>
    <property type="match status" value="1"/>
</dbReference>
<dbReference type="InterPro" id="IPR000271">
    <property type="entry name" value="Ribosomal_bL34"/>
</dbReference>
<dbReference type="NCBIfam" id="TIGR01030">
    <property type="entry name" value="rpmH_bact"/>
    <property type="match status" value="1"/>
</dbReference>
<dbReference type="PANTHER" id="PTHR14503:SF4">
    <property type="entry name" value="LARGE RIBOSOMAL SUBUNIT PROTEIN BL34M"/>
    <property type="match status" value="1"/>
</dbReference>
<dbReference type="PANTHER" id="PTHR14503">
    <property type="entry name" value="MITOCHONDRIAL RIBOSOMAL PROTEIN 34 FAMILY MEMBER"/>
    <property type="match status" value="1"/>
</dbReference>
<dbReference type="Pfam" id="PF00468">
    <property type="entry name" value="Ribosomal_L34"/>
    <property type="match status" value="1"/>
</dbReference>
<gene>
    <name type="primary">RPL34</name>
    <name type="ORF">SOVF_073030</name>
</gene>
<protein>
    <recommendedName>
        <fullName evidence="4">Large ribosomal subunit protein bL34c</fullName>
    </recommendedName>
    <alternativeName>
        <fullName evidence="3">50S ribosomal protein L34, chloroplastic</fullName>
    </alternativeName>
    <alternativeName>
        <fullName>CL34</fullName>
    </alternativeName>
</protein>
<organism>
    <name type="scientific">Spinacia oleracea</name>
    <name type="common">Spinach</name>
    <dbReference type="NCBI Taxonomy" id="3562"/>
    <lineage>
        <taxon>Eukaryota</taxon>
        <taxon>Viridiplantae</taxon>
        <taxon>Streptophyta</taxon>
        <taxon>Embryophyta</taxon>
        <taxon>Tracheophyta</taxon>
        <taxon>Spermatophyta</taxon>
        <taxon>Magnoliopsida</taxon>
        <taxon>eudicotyledons</taxon>
        <taxon>Gunneridae</taxon>
        <taxon>Pentapetalae</taxon>
        <taxon>Caryophyllales</taxon>
        <taxon>Chenopodiaceae</taxon>
        <taxon>Chenopodioideae</taxon>
        <taxon>Anserineae</taxon>
        <taxon>Spinacia</taxon>
    </lineage>
</organism>
<name>RK34_SPIOL</name>
<comment type="function">
    <text evidence="6 7">Component of the chloroplast ribosome (chloro-ribosome), a dedicated translation machinery responsible for the synthesis of chloroplast genome-encoded proteins, including proteins of the transcription and translation machinery and components of the photosynthetic apparatus.</text>
</comment>
<comment type="subunit">
    <text evidence="1 2">Component of the chloroplast large ribosomal subunit (LSU). Mature 70S chloroplast ribosomes of higher plants consist of a small (30S) and a large (50S) subunit. The 30S small subunit contains 1 molecule of ribosomal RNA (16S rRNA) and 24 different proteins. The 50S large subunit contains 3 rRNA molecules (23S, 5S and 4.5S rRNA) and 33 different proteins.</text>
</comment>
<comment type="subcellular location">
    <subcellularLocation>
        <location evidence="1 2">Plastid</location>
        <location evidence="1 2">Chloroplast</location>
    </subcellularLocation>
</comment>
<comment type="mass spectrometry" mass="6939.3" method="Electrospray" evidence="1"/>
<comment type="similarity">
    <text evidence="5">Belongs to the bacterial ribosomal protein bL34 family.</text>
</comment>